<comment type="function">
    <text evidence="1">P-II indirectly controls the transcription of the glutamine synthetase gene (glnA). P-II prevents NR-II-catalyzed conversion of NR-I to NR-I-phosphate, the transcriptional activator of glnA. When P-II is uridylylated to P-II-UMP, these events are reversed. When the ratio of Gln to 2-ketoglutarate decreases, P-II is uridylylated to P-II-UMP, which causes the deadenylation of glutamine synthetase, so activating the enzyme (By similarity).</text>
</comment>
<comment type="subunit">
    <text evidence="1">Homotrimer.</text>
</comment>
<comment type="subcellular location">
    <subcellularLocation>
        <location>Plastid</location>
        <location>Chloroplast</location>
    </subcellularLocation>
</comment>
<comment type="similarity">
    <text evidence="2">Belongs to the P(II) protein family.</text>
</comment>
<gene>
    <name type="primary">glnB</name>
</gene>
<geneLocation type="chloroplast"/>
<name>GLNB_PYRYE</name>
<reference key="1">
    <citation type="submission" date="2003-11" db="EMBL/GenBank/DDBJ databases">
        <title>Whole genome sequence of Porphyra yezoensis chloroplast.</title>
        <authorList>
            <person name="Kunimoto M."/>
            <person name="Morishima K."/>
            <person name="Yoshikawa M."/>
            <person name="Fukuda S."/>
            <person name="Kobayashi T."/>
            <person name="Kobayashi M."/>
            <person name="Okazaki T."/>
            <person name="Ohara I."/>
            <person name="Nakayama I."/>
        </authorList>
    </citation>
    <scope>NUCLEOTIDE SEQUENCE [LARGE SCALE GENOMIC DNA]</scope>
    <source>
        <strain>U-51</strain>
    </source>
</reference>
<proteinExistence type="inferred from homology"/>
<feature type="chain" id="PRO_0000277288" description="Nitrogen regulatory protein P-II">
    <location>
        <begin position="1"/>
        <end position="112"/>
    </location>
</feature>
<feature type="modified residue" description="O-UMP-tyrosine" evidence="2">
    <location>
        <position position="51"/>
    </location>
</feature>
<accession>Q1XDN3</accession>
<sequence length="112" mass="12581">MKKIEAIIRPFKLNEVKLALVKEGIGGMTVIKVSGFGRQKGQTERYKGSEYSIDIIDKIKIEIIISDDKVEKIVETIIKASKTGEIGDGKIFISSIERVIRIRTNDLNFEAL</sequence>
<dbReference type="EMBL" id="AP006715">
    <property type="protein sequence ID" value="BAE92378.1"/>
    <property type="molecule type" value="Genomic_DNA"/>
</dbReference>
<dbReference type="RefSeq" id="YP_536935.1">
    <property type="nucleotide sequence ID" value="NC_007932.1"/>
</dbReference>
<dbReference type="SMR" id="Q1XDN3"/>
<dbReference type="GeneID" id="3978886"/>
<dbReference type="GO" id="GO:0009507">
    <property type="term" value="C:chloroplast"/>
    <property type="evidence" value="ECO:0007669"/>
    <property type="project" value="UniProtKB-SubCell"/>
</dbReference>
<dbReference type="GO" id="GO:0005829">
    <property type="term" value="C:cytosol"/>
    <property type="evidence" value="ECO:0007669"/>
    <property type="project" value="TreeGrafter"/>
</dbReference>
<dbReference type="GO" id="GO:0005524">
    <property type="term" value="F:ATP binding"/>
    <property type="evidence" value="ECO:0007669"/>
    <property type="project" value="TreeGrafter"/>
</dbReference>
<dbReference type="GO" id="GO:0030234">
    <property type="term" value="F:enzyme regulator activity"/>
    <property type="evidence" value="ECO:0007669"/>
    <property type="project" value="InterPro"/>
</dbReference>
<dbReference type="GO" id="GO:0006808">
    <property type="term" value="P:regulation of nitrogen utilization"/>
    <property type="evidence" value="ECO:0007669"/>
    <property type="project" value="InterPro"/>
</dbReference>
<dbReference type="Gene3D" id="3.30.70.120">
    <property type="match status" value="1"/>
</dbReference>
<dbReference type="InterPro" id="IPR002187">
    <property type="entry name" value="N-reg_PII"/>
</dbReference>
<dbReference type="InterPro" id="IPR011322">
    <property type="entry name" value="N-reg_PII-like_a/b"/>
</dbReference>
<dbReference type="InterPro" id="IPR015867">
    <property type="entry name" value="N-reg_PII/ATP_PRibTrfase_C"/>
</dbReference>
<dbReference type="InterPro" id="IPR017918">
    <property type="entry name" value="N-reg_PII_CS"/>
</dbReference>
<dbReference type="InterPro" id="IPR002332">
    <property type="entry name" value="N-reg_PII_urydylation_site"/>
</dbReference>
<dbReference type="PANTHER" id="PTHR30115">
    <property type="entry name" value="NITROGEN REGULATORY PROTEIN P-II"/>
    <property type="match status" value="1"/>
</dbReference>
<dbReference type="PANTHER" id="PTHR30115:SF11">
    <property type="entry name" value="NITROGEN REGULATORY PROTEIN P-II HOMOLOG"/>
    <property type="match status" value="1"/>
</dbReference>
<dbReference type="Pfam" id="PF00543">
    <property type="entry name" value="P-II"/>
    <property type="match status" value="1"/>
</dbReference>
<dbReference type="PRINTS" id="PR00340">
    <property type="entry name" value="PIIGLNB"/>
</dbReference>
<dbReference type="SMART" id="SM00938">
    <property type="entry name" value="P-II"/>
    <property type="match status" value="1"/>
</dbReference>
<dbReference type="SUPFAM" id="SSF54913">
    <property type="entry name" value="GlnB-like"/>
    <property type="match status" value="1"/>
</dbReference>
<dbReference type="PROSITE" id="PS00638">
    <property type="entry name" value="PII_GLNB_CTER"/>
    <property type="match status" value="1"/>
</dbReference>
<dbReference type="PROSITE" id="PS51343">
    <property type="entry name" value="PII_GLNB_DOM"/>
    <property type="match status" value="1"/>
</dbReference>
<dbReference type="PROSITE" id="PS00496">
    <property type="entry name" value="PII_GLNB_UMP"/>
    <property type="match status" value="1"/>
</dbReference>
<evidence type="ECO:0000250" key="1"/>
<evidence type="ECO:0000255" key="2">
    <source>
        <dbReference type="PROSITE-ProRule" id="PRU00675"/>
    </source>
</evidence>
<keyword id="KW-0150">Chloroplast</keyword>
<keyword id="KW-0547">Nucleotide-binding</keyword>
<keyword id="KW-0597">Phosphoprotein</keyword>
<keyword id="KW-0934">Plastid</keyword>
<keyword id="KW-0804">Transcription</keyword>
<keyword id="KW-0805">Transcription regulation</keyword>
<organism>
    <name type="scientific">Pyropia yezoensis</name>
    <name type="common">Susabi-nori</name>
    <name type="synonym">Porphyra yezoensis</name>
    <dbReference type="NCBI Taxonomy" id="2788"/>
    <lineage>
        <taxon>Eukaryota</taxon>
        <taxon>Rhodophyta</taxon>
        <taxon>Bangiophyceae</taxon>
        <taxon>Bangiales</taxon>
        <taxon>Bangiaceae</taxon>
        <taxon>Pyropia</taxon>
    </lineage>
</organism>
<protein>
    <recommendedName>
        <fullName>Nitrogen regulatory protein P-II</fullName>
    </recommendedName>
</protein>